<gene>
    <name type="ORF">ORF2</name>
</gene>
<proteinExistence type="evidence at protein level"/>
<comment type="function">
    <molecule>Capsid polyprotein VP86</molecule>
    <text evidence="2">The capsid polyprotein VP90 self-assembles and undergoes a proteolytic cleavage by host caspases to yield the immature VP70 virion.</text>
</comment>
<comment type="function">
    <molecule>Core protein VP33</molecule>
    <text evidence="1">Self-assembles to form an icosahedral capsid with a T=3 symmetry, about 43 nm in diameter.</text>
</comment>
<comment type="function">
    <molecule>Spike protein VP38</molecule>
    <text evidence="1 6">Forms the spikes at the surface of the virion (PubMed:38416796). Plays a role in the attachment to target host cell (By similarity).</text>
</comment>
<comment type="subunit">
    <molecule>Spike protein VP38</molecule>
    <text evidence="6">Homodimer.</text>
</comment>
<comment type="subcellular location">
    <molecule>Capsid polyprotein VP86</molecule>
    <subcellularLocation>
        <location evidence="2">Virion</location>
    </subcellularLocation>
    <text evidence="2">Immature capsid.</text>
</comment>
<comment type="subcellular location">
    <molecule>Core protein VP33</molecule>
    <subcellularLocation>
        <location evidence="4">Virion</location>
    </subcellularLocation>
    <text evidence="1">Capsid.</text>
</comment>
<comment type="subcellular location">
    <molecule>Spike protein VP38</molecule>
    <subcellularLocation>
        <location evidence="4">Virion</location>
    </subcellularLocation>
    <text evidence="1">Capsid.</text>
</comment>
<comment type="domain">
    <molecule>Spike protein VP38</molecule>
    <text evidence="2">Contains the core attachment region and the P2 globular region.</text>
</comment>
<comment type="domain">
    <molecule>Capsid polyprotein VP86</molecule>
    <text evidence="5">Contains a lipid disrupting region that is exposed after trypsin treatment.</text>
</comment>
<comment type="domain">
    <molecule>Capsid polyprotein VP86</molecule>
    <text evidence="10">The highly basic N-terminus region binds to the viral RNA genome.</text>
</comment>
<comment type="PTM">
    <molecule>Capsid polyprotein VP86</molecule>
    <text evidence="4 6">Specific enzymatic cleavages by the host yield mature proteins. VP86 is processed into VP33 and VP38 (PubMed:35762760, PubMed:38416796). Host caspases are not involved in processing capsid precursor (PubMed:35762760).</text>
</comment>
<comment type="miscellaneous">
    <text evidence="8">The Human astrovirus VA1 is a neurotropic virus.</text>
</comment>
<comment type="similarity">
    <text evidence="8">Belongs to the astroviridae capsid polyprotein family.</text>
</comment>
<evidence type="ECO:0000250" key="1">
    <source>
        <dbReference type="UniProtKB" id="O12792"/>
    </source>
</evidence>
<evidence type="ECO:0000250" key="2">
    <source>
        <dbReference type="UniProtKB" id="Q9IFX1"/>
    </source>
</evidence>
<evidence type="ECO:0000256" key="3">
    <source>
        <dbReference type="SAM" id="MobiDB-lite"/>
    </source>
</evidence>
<evidence type="ECO:0000269" key="4">
    <source>
    </source>
</evidence>
<evidence type="ECO:0000269" key="5">
    <source>
    </source>
</evidence>
<evidence type="ECO:0000269" key="6">
    <source>
    </source>
</evidence>
<evidence type="ECO:0000303" key="7">
    <source>
    </source>
</evidence>
<evidence type="ECO:0000305" key="8"/>
<evidence type="ECO:0000305" key="9">
    <source>
    </source>
</evidence>
<evidence type="ECO:0000305" key="10">
    <source>
    </source>
</evidence>
<evidence type="ECO:0007744" key="11">
    <source>
        <dbReference type="PDB" id="8UFN"/>
    </source>
</evidence>
<evidence type="ECO:0007744" key="12">
    <source>
        <dbReference type="PDB" id="8UFO"/>
    </source>
</evidence>
<evidence type="ECO:0007829" key="13">
    <source>
        <dbReference type="PDB" id="8UFO"/>
    </source>
</evidence>
<protein>
    <recommendedName>
        <fullName evidence="7">Capsid polyprotein VP86</fullName>
    </recommendedName>
    <component>
        <recommendedName>
            <fullName evidence="7">Core protein VP33</fullName>
        </recommendedName>
    </component>
    <component>
        <recommendedName>
            <fullName evidence="7">Spike protein VP38</fullName>
        </recommendedName>
    </component>
</protein>
<organismHost>
    <name type="scientific">Homo sapiens</name>
    <name type="common">Human</name>
    <dbReference type="NCBI Taxonomy" id="9606"/>
</organismHost>
<accession>C7BG48</accession>
<accession>A0A3S6A2I7</accession>
<accession>A0A7T8EHX9</accession>
<sequence>MAGRQPQQALPKAAAKQIAKEVVKQEKKEPVVRKKKQFYPNPKFNNRFNKKFVKKQLDKNLKKQGFEGPKPRFAVTVSATIGKVGPNKSQGPELQISTFMHPSLMKEPNDGTNFGPLQSAAAQWGLWRLKNLSVTFTPLVGPSAVTGSVFRISLNMAQSPGATSWGGLGARKHKDVAVGKQFTWKLQKGDLTGPRETWWLTDTNEEGAQSCGPLLEIHGLGETTSTYKDAAWAGDLFIVEVRGRWEFANYNSKPALGMLERVTETTNASIEVANGNMIMTVPQNSQLARHMSERFERTTNASTVGETIWQIVDEGAGLVANVAPPPFTWLIKGGWWFVKKLLGRSANTDVQYLVYASLADAQNNRPVEAQNYTKVTRQTTLSSTQINAPNTGPNTTTGSIGNNNQQWPIPPTGVPVGDFYVCGRMTTLHMGGQSGIQATTLVNGMIYRTDHPEPSTSPVSNWEFTVLENNTIVGAGMGCVWFQKSEALVWTLDGQKLSGWNTLDGVGTTQLTVAWRQHNRTIYGWANVVAWNSEEWHTNAEQPHQPILRLTYWLVKINVLSEPEDFDVVQKSPLAYLEDYTTAQSKSAIQKLNFQTFQKPEGGGTLRAQYSTTPRQGDFAVIWQIGRHNFDMSTGKGTPVESLSDYVMPQQKDAHIGMWYRALTSVGPRSDVLTLHFHLPTVEKDLVEQIIDQIQHRYRLTPLDSDSDSSSSDSDFEPEDRFEKLKIYEGLRSSGLSHHVSDGAAIAVKKKLRRGHAE</sequence>
<organism>
    <name type="scientific">Human astrovirus VA1</name>
    <name type="common">HAstV-VA1</name>
    <name type="synonym">Mamastrovirus 9</name>
    <dbReference type="NCBI Taxonomy" id="645687"/>
    <lineage>
        <taxon>Viruses</taxon>
        <taxon>Riboviria</taxon>
        <taxon>Orthornavirae</taxon>
        <taxon>Pisuviricota</taxon>
        <taxon>Stelpaviricetes</taxon>
        <taxon>Stellavirales</taxon>
        <taxon>Astroviridae</taxon>
        <taxon>Mamastrovirus</taxon>
        <taxon>Mamastrovirus 9</taxon>
    </lineage>
</organism>
<reference key="1">
    <citation type="journal article" date="2009" name="J. Virol.">
        <title>Identification of a novel astrovirus (astrovirus VA1) associated with an outbreak of acute gastroenteritis.</title>
        <authorList>
            <person name="Finkbeiner S.R."/>
            <person name="Li Y."/>
            <person name="Ruone S."/>
            <person name="Conrardy C."/>
            <person name="Gregoricus N."/>
            <person name="Toney D."/>
            <person name="Virgin H.W."/>
            <person name="Anderson L.J."/>
            <person name="Vinje J."/>
            <person name="Wang D."/>
            <person name="Tong S."/>
        </authorList>
    </citation>
    <scope>NUCLEOTIDE SEQUENCE [GENOMIC RNA]</scope>
</reference>
<reference key="2">
    <citation type="journal article" date="2010" name="J. Clin. Microbiol.">
        <title>Human astrovirus infection in a patient with new-onset celiac disease.</title>
        <authorList>
            <person name="Smits S.L."/>
            <person name="van Leeuwen M."/>
            <person name="van der Eijk A.A."/>
            <person name="Fraaij P.L."/>
            <person name="Escher J.C."/>
            <person name="Simon J.H."/>
            <person name="Osterhaus A.D."/>
        </authorList>
    </citation>
    <scope>NUCLEOTIDE SEQUENCE [GENOMIC RNA]</scope>
    <source>
        <strain>VS34</strain>
    </source>
</reference>
<reference key="3">
    <citation type="journal article" date="2017" name="J. Virol.">
        <title>Propagation of astrovirus VA1, a recently identified neurotropic human astrovirus, in cell culture.</title>
        <authorList>
            <person name="Janowski A.B."/>
            <person name="Bauer I.K."/>
            <person name="Holtz L.R."/>
            <person name="Wang D."/>
        </authorList>
    </citation>
    <scope>NUCLEOTIDE SEQUENCE [GENOMIC RNA]</scope>
    <source>
        <strain>Isolate C-P5</strain>
    </source>
</reference>
<reference key="4">
    <citation type="journal article" date="2022" name="Transbound. Emerg. Dis.">
        <title>Astrovirus VA1 in patients with acute gastroenteritis.</title>
        <authorList>
            <person name="Lanave G."/>
            <person name="Loconsole D."/>
            <person name="Centrone F."/>
            <person name="Catella C."/>
            <person name="Capozza P."/>
            <person name="Diakoudi G."/>
            <person name="Parisi A."/>
            <person name="Suffredini E."/>
            <person name="Buonavoglia A."/>
            <person name="Camero M."/>
            <person name="Chironna M."/>
            <person name="Martella V."/>
        </authorList>
    </citation>
    <scope>NUCLEOTIDE SEQUENCE [GENOMIC RNA]</scope>
    <source>
        <strain>Isolate ITA/205.18-5/2018</strain>
    </source>
</reference>
<reference key="5">
    <citation type="journal article" date="2022" name="J. Virol.">
        <title>The Capsid Precursor Protein of Astrovirus VA1 Is Proteolytically Processed Intracellularly.</title>
        <authorList>
            <person name="Aguilera-Flores C."/>
            <person name="Lopez T."/>
            <person name="Zamudio F."/>
            <person name="Sandoval-Jaime C."/>
            <person name="Perez E.I."/>
            <person name="Lopez S."/>
            <person name="DuBois R."/>
            <person name="Arias C.F."/>
        </authorList>
    </citation>
    <scope>PROTEIN SEQUENCE OF 348-362</scope>
    <scope>PROTEOLYTIC CLEAVAGE (CAPSID POLYPROTEIN VP86)</scope>
</reference>
<reference key="6">
    <citation type="journal article" date="2023" name="J. Virol.">
        <title>Human astrovirus capsid protein releases a membrane lytic peptide upon trypsin maturation.</title>
        <authorList>
            <person name="Ykema M."/>
            <person name="Ye K."/>
            <person name="Xun M."/>
            <person name="Harper J."/>
            <person name="Betancourt-Solis M.A."/>
            <person name="Arias C.F."/>
            <person name="McNew J.A."/>
            <person name="Tao Y.J."/>
        </authorList>
    </citation>
    <scope>DOMAIN (CAPSID POLYPROTEIN VP86)</scope>
</reference>
<reference evidence="11 12" key="7">
    <citation type="journal article" date="2024" name="PLoS Pathog.">
        <title>Structure and antigenicity of the divergent human astrovirus VA1 capsid spike.</title>
        <authorList>
            <person name="Ghosh A."/>
            <person name="Delgado-Cunningham K."/>
            <person name="Lopez T."/>
            <person name="Green K."/>
            <person name="Arias C.F."/>
            <person name="DuBois R.M."/>
        </authorList>
    </citation>
    <scope>X-RAY CRYSTALLOGRAPHY (1.46 ANGSTROMS) OF 408-684</scope>
    <scope>DOMAIN (CAPSID PROTEIN VP86)</scope>
    <scope>SUBUNIT (SPIKE PROTEIN VP38)</scope>
    <scope>STRUCTURE BY ELECTRON MICROSCOPY (X.X ANGSTROMS) OF THE VIRION</scope>
    <scope>PROTEOLYTIC CLEAVAGE (CAPSID POLYPROTEIN VP86)</scope>
    <scope>FUNCTION (SPIKE PROTEIN VP38)</scope>
</reference>
<feature type="chain" id="PRO_0000460939" description="Capsid polyprotein VP86">
    <location>
        <begin position="1"/>
        <end position="758"/>
    </location>
</feature>
<feature type="chain" id="PRO_0000460940" description="Core protein VP33">
    <location>
        <begin position="1"/>
        <end position="298"/>
    </location>
</feature>
<feature type="chain" id="PRO_0000460941" description="Spike protein VP38">
    <location>
        <begin position="348"/>
        <end position="690"/>
    </location>
</feature>
<feature type="region of interest" description="Basic" evidence="2">
    <location>
        <begin position="1"/>
        <end position="62"/>
    </location>
</feature>
<feature type="region of interest" description="Disordered" evidence="3">
    <location>
        <begin position="21"/>
        <end position="43"/>
    </location>
</feature>
<feature type="region of interest" description="Inner core" evidence="2">
    <location>
        <begin position="63"/>
        <end position="255"/>
    </location>
</feature>
<feature type="compositionally biased region" description="Basic and acidic residues" evidence="3">
    <location>
        <begin position="21"/>
        <end position="32"/>
    </location>
</feature>
<feature type="site" description="Cleavage" evidence="9">
    <location>
        <begin position="298"/>
        <end position="299"/>
    </location>
</feature>
<feature type="site" description="Cleavage" evidence="9">
    <location>
        <begin position="347"/>
        <end position="348"/>
    </location>
</feature>
<feature type="sequence variant" description="In strain: VS34 and Isolate ITA/205.18-5/2018.">
    <original>R</original>
    <variation>K</variation>
    <location>
        <position position="4"/>
    </location>
</feature>
<feature type="sequence variant" description="In strain: Isolate ITA/205.18-5/2018.">
    <original>K</original>
    <variation>R</variation>
    <location>
        <position position="36"/>
    </location>
</feature>
<feature type="sequence variant" description="In strain: VS34.">
    <original>K</original>
    <variation>R</variation>
    <location>
        <position position="70"/>
    </location>
</feature>
<feature type="sequence variant" description="In strain: VS34.">
    <original>N</original>
    <variation>T</variation>
    <location>
        <position position="519"/>
    </location>
</feature>
<feature type="sequence variant" description="In strain: Isolate ITA/205.18-5/2018.">
    <original>S</original>
    <variation>A</variation>
    <location>
        <position position="561"/>
    </location>
</feature>
<feature type="sequence variant" description="In strain: VS34.">
    <original>T</original>
    <variation>S</variation>
    <location>
        <position position="613"/>
    </location>
</feature>
<feature type="sequence variant" description="In strain: VS34.">
    <original>V</original>
    <variation>I</variation>
    <location>
        <position position="666"/>
    </location>
</feature>
<feature type="strand" evidence="13">
    <location>
        <begin position="417"/>
        <end position="433"/>
    </location>
</feature>
<feature type="strand" evidence="13">
    <location>
        <begin position="461"/>
        <end position="468"/>
    </location>
</feature>
<feature type="strand" evidence="13">
    <location>
        <begin position="471"/>
        <end position="482"/>
    </location>
</feature>
<feature type="helix" evidence="13">
    <location>
        <begin position="484"/>
        <end position="486"/>
    </location>
</feature>
<feature type="strand" evidence="13">
    <location>
        <begin position="487"/>
        <end position="493"/>
    </location>
</feature>
<feature type="strand" evidence="13">
    <location>
        <begin position="496"/>
        <end position="501"/>
    </location>
</feature>
<feature type="strand" evidence="13">
    <location>
        <begin position="512"/>
        <end position="516"/>
    </location>
</feature>
<feature type="strand" evidence="13">
    <location>
        <begin position="521"/>
        <end position="535"/>
    </location>
</feature>
<feature type="strand" evidence="13">
    <location>
        <begin position="548"/>
        <end position="557"/>
    </location>
</feature>
<feature type="strand" evidence="13">
    <location>
        <begin position="566"/>
        <end position="568"/>
    </location>
</feature>
<feature type="strand" evidence="13">
    <location>
        <begin position="570"/>
        <end position="574"/>
    </location>
</feature>
<feature type="strand" evidence="13">
    <location>
        <begin position="577"/>
        <end position="579"/>
    </location>
</feature>
<feature type="strand" evidence="13">
    <location>
        <begin position="582"/>
        <end position="587"/>
    </location>
</feature>
<feature type="strand" evidence="13">
    <location>
        <begin position="589"/>
        <end position="598"/>
    </location>
</feature>
<feature type="strand" evidence="13">
    <location>
        <begin position="606"/>
        <end position="610"/>
    </location>
</feature>
<feature type="strand" evidence="13">
    <location>
        <begin position="619"/>
        <end position="627"/>
    </location>
</feature>
<feature type="turn" evidence="13">
    <location>
        <begin position="632"/>
        <end position="634"/>
    </location>
</feature>
<feature type="helix" evidence="13">
    <location>
        <begin position="659"/>
        <end position="663"/>
    </location>
</feature>
<feature type="strand" evidence="13">
    <location>
        <begin position="669"/>
        <end position="678"/>
    </location>
</feature>
<keyword id="KW-0002">3D-structure</keyword>
<keyword id="KW-0167">Capsid protein</keyword>
<keyword id="KW-1165">Clathrin-mediated endocytosis of virus by host</keyword>
<keyword id="KW-0903">Direct protein sequencing</keyword>
<keyword id="KW-1142">T=3 icosahedral capsid protein</keyword>
<keyword id="KW-1162">Viral penetration into host cytoplasm</keyword>
<keyword id="KW-0946">Virion</keyword>
<keyword id="KW-1164">Virus endocytosis by host</keyword>
<keyword id="KW-1160">Virus entry into host cell</keyword>
<dbReference type="EMBL" id="FJ973620">
    <property type="protein sequence ID" value="ACR23349.1"/>
    <property type="molecule type" value="Genomic_RNA"/>
</dbReference>
<dbReference type="EMBL" id="HM484374">
    <property type="protein sequence ID" value="ADJ56371.1"/>
    <property type="molecule type" value="Genomic_RNA"/>
</dbReference>
<dbReference type="EMBL" id="KY933670">
    <property type="protein sequence ID" value="ASJ26376.1"/>
    <property type="molecule type" value="Genomic_RNA"/>
</dbReference>
<dbReference type="EMBL" id="MT432184">
    <property type="protein sequence ID" value="QQO86658.1"/>
    <property type="molecule type" value="Genomic_RNA"/>
</dbReference>
<dbReference type="EMBL" id="PP236967">
    <property type="status" value="NOT_ANNOTATED_CDS"/>
    <property type="molecule type" value="Genomic_RNA"/>
</dbReference>
<dbReference type="RefSeq" id="YP_003090288.1">
    <property type="nucleotide sequence ID" value="NC_013060.1"/>
</dbReference>
<dbReference type="PDB" id="8UFN">
    <property type="method" value="X-ray"/>
    <property type="resolution" value="2.73 A"/>
    <property type="chains" value="A/B=408-682"/>
</dbReference>
<dbReference type="PDB" id="8UFO">
    <property type="method" value="X-ray"/>
    <property type="resolution" value="1.46 A"/>
    <property type="chains" value="A/C=408-684"/>
</dbReference>
<dbReference type="PDBsum" id="8UFN"/>
<dbReference type="PDBsum" id="8UFO"/>
<dbReference type="SMR" id="C7BG48"/>
<dbReference type="KEGG" id="vg:8289955"/>
<dbReference type="OrthoDB" id="2793at10239"/>
<dbReference type="Proteomes" id="UP000171286">
    <property type="component" value="Genome"/>
</dbReference>
<dbReference type="GO" id="GO:0039617">
    <property type="term" value="C:T=3 icosahedral viral capsid"/>
    <property type="evidence" value="ECO:0007669"/>
    <property type="project" value="UniProtKB-KW"/>
</dbReference>
<dbReference type="GO" id="GO:0075512">
    <property type="term" value="P:clathrin-dependent endocytosis of virus by host cell"/>
    <property type="evidence" value="ECO:0007669"/>
    <property type="project" value="UniProtKB-KW"/>
</dbReference>
<dbReference type="Gene3D" id="2.60.120.20">
    <property type="match status" value="1"/>
</dbReference>
<dbReference type="InterPro" id="IPR004337">
    <property type="entry name" value="Astro_capsid_N"/>
</dbReference>
<dbReference type="InterPro" id="IPR029053">
    <property type="entry name" value="Viral_coat"/>
</dbReference>
<dbReference type="Pfam" id="PF03115">
    <property type="entry name" value="Astro_capsid_N"/>
    <property type="match status" value="1"/>
</dbReference>
<name>CAPSD_HASVA</name>